<protein>
    <recommendedName>
        <fullName>Antitrypsin</fullName>
        <shortName>AT</shortName>
    </recommendedName>
</protein>
<name>A1AT_BOMMO</name>
<sequence length="392" mass="43499">MKTIICLFTIAIAAMAAVTNLSNVLKNGNDNFTARMFTEVVKNNPGKSIVLSAFSVLPPLAQLALASDGETHEELLKAIGFPDDDAIRTEFASKSRDLRSIKGVELKMANKVYVHDGGKLDENFAVVSRDVFNSDVQNIDFSKNTVAAKSINDWVEENTNNRIKDLVNPDSLSSATAAVLVNAIYFKGAWSSKFDERLTSDRDFYVSKDKTIKVPMMYKRGDYKYGESAVLNAQLIEIPYKGDQSSLIVVLPKDKDGITQLQEALKDPKTLETAQQSMYSTEVDLYLPKFKIETETNLKDVLSNMNVNKIFNNDAQITRLLKGESLSVSEAIQKAFIEINEEGAEAAAANAFTMTRSSKVYVRPPIVFNANKPFYYALQVDGVIMFNGIFIN</sequence>
<organism>
    <name type="scientific">Bombyx mori</name>
    <name type="common">Silk moth</name>
    <dbReference type="NCBI Taxonomy" id="7091"/>
    <lineage>
        <taxon>Eukaryota</taxon>
        <taxon>Metazoa</taxon>
        <taxon>Ecdysozoa</taxon>
        <taxon>Arthropoda</taxon>
        <taxon>Hexapoda</taxon>
        <taxon>Insecta</taxon>
        <taxon>Pterygota</taxon>
        <taxon>Neoptera</taxon>
        <taxon>Endopterygota</taxon>
        <taxon>Lepidoptera</taxon>
        <taxon>Glossata</taxon>
        <taxon>Ditrysia</taxon>
        <taxon>Bombycoidea</taxon>
        <taxon>Bombycidae</taxon>
        <taxon>Bombycinae</taxon>
        <taxon>Bombyx</taxon>
    </lineage>
</organism>
<reference key="1">
    <citation type="journal article" date="1990" name="J. Biochem.">
        <title>Amino acid sequence of silkworm (Bombyx mori) hemolymph antitrypsin deduced from its cDNA nucleotide sequence: confirmation of its homology with serpins.</title>
        <authorList>
            <person name="Takagi H."/>
            <person name="Narumi H."/>
            <person name="Nakamura K."/>
            <person name="Sasaki T."/>
        </authorList>
    </citation>
    <scope>NUCLEOTIDE SEQUENCE [MRNA]</scope>
    <scope>PROTEIN SEQUENCE OF 17-47</scope>
    <source>
        <tissue>Larval fat body</tissue>
    </source>
</reference>
<reference key="2">
    <citation type="journal article" date="1990" name="Agric. Biol. Chem.">
        <title>Limited proteolysis of silkworm antitrypsin by several proteinases.</title>
        <authorList>
            <person name="Sasaki T."/>
            <person name="Kohara A."/>
            <person name="Takagi H."/>
            <person name="Shimidzu T."/>
        </authorList>
    </citation>
    <scope>PROTEIN SEQUENCE OF 352-376</scope>
</reference>
<dbReference type="EMBL" id="D00738">
    <property type="protein sequence ID" value="BAA00639.1"/>
    <property type="molecule type" value="mRNA"/>
</dbReference>
<dbReference type="PIR" id="JX0130">
    <property type="entry name" value="JX0130"/>
</dbReference>
<dbReference type="RefSeq" id="NP_001037305.1">
    <property type="nucleotide sequence ID" value="NM_001043840.1"/>
</dbReference>
<dbReference type="SMR" id="P22922"/>
<dbReference type="FunCoup" id="P22922">
    <property type="interactions" value="81"/>
</dbReference>
<dbReference type="STRING" id="7091.P22922"/>
<dbReference type="MEROPS" id="I04.031"/>
<dbReference type="PaxDb" id="7091-BGIBMGA009953-TA"/>
<dbReference type="EnsemblMetazoa" id="NM_001043840.1">
    <property type="protein sequence ID" value="NP_001037305.1"/>
    <property type="gene ID" value="GeneID_692739"/>
</dbReference>
<dbReference type="GeneID" id="692739"/>
<dbReference type="KEGG" id="bmor:692739"/>
<dbReference type="CTD" id="692739"/>
<dbReference type="eggNOG" id="KOG2392">
    <property type="taxonomic scope" value="Eukaryota"/>
</dbReference>
<dbReference type="HOGENOM" id="CLU_023330_2_0_1"/>
<dbReference type="InParanoid" id="P22922"/>
<dbReference type="OrthoDB" id="607072at7088"/>
<dbReference type="Proteomes" id="UP000005204">
    <property type="component" value="Unassembled WGS sequence"/>
</dbReference>
<dbReference type="GO" id="GO:0005615">
    <property type="term" value="C:extracellular space"/>
    <property type="evidence" value="ECO:0007669"/>
    <property type="project" value="InterPro"/>
</dbReference>
<dbReference type="GO" id="GO:0004867">
    <property type="term" value="F:serine-type endopeptidase inhibitor activity"/>
    <property type="evidence" value="ECO:0007669"/>
    <property type="project" value="UniProtKB-KW"/>
</dbReference>
<dbReference type="CDD" id="cd19579">
    <property type="entry name" value="serpin1K-like"/>
    <property type="match status" value="1"/>
</dbReference>
<dbReference type="Gene3D" id="2.30.39.10">
    <property type="entry name" value="Alpha-1-antitrypsin, domain 1"/>
    <property type="match status" value="1"/>
</dbReference>
<dbReference type="Gene3D" id="3.30.497.10">
    <property type="entry name" value="Antithrombin, subunit I, domain 2"/>
    <property type="match status" value="1"/>
</dbReference>
<dbReference type="InterPro" id="IPR023795">
    <property type="entry name" value="Serpin_CS"/>
</dbReference>
<dbReference type="InterPro" id="IPR023796">
    <property type="entry name" value="Serpin_dom"/>
</dbReference>
<dbReference type="InterPro" id="IPR000215">
    <property type="entry name" value="Serpin_fam"/>
</dbReference>
<dbReference type="InterPro" id="IPR036186">
    <property type="entry name" value="Serpin_sf"/>
</dbReference>
<dbReference type="InterPro" id="IPR042178">
    <property type="entry name" value="Serpin_sf_1"/>
</dbReference>
<dbReference type="InterPro" id="IPR042185">
    <property type="entry name" value="Serpin_sf_2"/>
</dbReference>
<dbReference type="PANTHER" id="PTHR11461:SF211">
    <property type="entry name" value="GH10112P-RELATED"/>
    <property type="match status" value="1"/>
</dbReference>
<dbReference type="PANTHER" id="PTHR11461">
    <property type="entry name" value="SERINE PROTEASE INHIBITOR, SERPIN"/>
    <property type="match status" value="1"/>
</dbReference>
<dbReference type="Pfam" id="PF00079">
    <property type="entry name" value="Serpin"/>
    <property type="match status" value="1"/>
</dbReference>
<dbReference type="SMART" id="SM00093">
    <property type="entry name" value="SERPIN"/>
    <property type="match status" value="1"/>
</dbReference>
<dbReference type="SUPFAM" id="SSF56574">
    <property type="entry name" value="Serpins"/>
    <property type="match status" value="1"/>
</dbReference>
<dbReference type="PROSITE" id="PS00284">
    <property type="entry name" value="SERPIN"/>
    <property type="match status" value="1"/>
</dbReference>
<proteinExistence type="evidence at protein level"/>
<accession>P22922</accession>
<comment type="function">
    <text>May play a role in the prophenoloxidase activating system in the silkworm hemolymph.</text>
</comment>
<comment type="subcellular location">
    <subcellularLocation>
        <location>Secreted</location>
    </subcellularLocation>
</comment>
<comment type="tissue specificity">
    <text>Hemolymph.</text>
</comment>
<comment type="domain">
    <text evidence="1">The reactive center loop (RCL) extends out from the body of the protein and directs binding to the target protease. The protease cleaves the serpin at the reactive site within the RCL, establishing a covalent linkage between the serpin reactive site and the active site of the protease. The resulting inactive serpin-protease complex is highly stable (By similarity).</text>
</comment>
<comment type="similarity">
    <text evidence="3">Belongs to the serpin family.</text>
</comment>
<evidence type="ECO:0000250" key="1"/>
<evidence type="ECO:0000269" key="2">
    <source>
    </source>
</evidence>
<evidence type="ECO:0000305" key="3"/>
<keyword id="KW-0903">Direct protein sequencing</keyword>
<keyword id="KW-0646">Protease inhibitor</keyword>
<keyword id="KW-1185">Reference proteome</keyword>
<keyword id="KW-0964">Secreted</keyword>
<keyword id="KW-0722">Serine protease inhibitor</keyword>
<keyword id="KW-0732">Signal</keyword>
<feature type="signal peptide" evidence="2">
    <location>
        <begin position="1"/>
        <end position="16"/>
    </location>
</feature>
<feature type="chain" id="PRO_0000032408" description="Antitrypsin">
    <location>
        <begin position="17"/>
        <end position="392"/>
    </location>
</feature>
<feature type="site" description="Reactive bond">
    <location>
        <begin position="359"/>
        <end position="360"/>
    </location>
</feature>